<accession>Q3Z4S7</accession>
<dbReference type="EMBL" id="CP000038">
    <property type="protein sequence ID" value="AAZ87235.1"/>
    <property type="molecule type" value="Genomic_DNA"/>
</dbReference>
<dbReference type="RefSeq" id="WP_001195025.1">
    <property type="nucleotide sequence ID" value="NC_007384.1"/>
</dbReference>
<dbReference type="SMR" id="Q3Z4S7"/>
<dbReference type="GeneID" id="93776978"/>
<dbReference type="KEGG" id="ssn:SSON_0459"/>
<dbReference type="HOGENOM" id="CLU_060739_1_2_6"/>
<dbReference type="Proteomes" id="UP000002529">
    <property type="component" value="Chromosome"/>
</dbReference>
<dbReference type="GO" id="GO:0003677">
    <property type="term" value="F:DNA binding"/>
    <property type="evidence" value="ECO:0007669"/>
    <property type="project" value="UniProtKB-UniRule"/>
</dbReference>
<dbReference type="GO" id="GO:0008270">
    <property type="term" value="F:zinc ion binding"/>
    <property type="evidence" value="ECO:0007669"/>
    <property type="project" value="UniProtKB-KW"/>
</dbReference>
<dbReference type="GO" id="GO:0006310">
    <property type="term" value="P:DNA recombination"/>
    <property type="evidence" value="ECO:0007669"/>
    <property type="project" value="UniProtKB-UniRule"/>
</dbReference>
<dbReference type="GO" id="GO:0006281">
    <property type="term" value="P:DNA repair"/>
    <property type="evidence" value="ECO:0007669"/>
    <property type="project" value="UniProtKB-UniRule"/>
</dbReference>
<dbReference type="CDD" id="cd01025">
    <property type="entry name" value="TOPRIM_recR"/>
    <property type="match status" value="1"/>
</dbReference>
<dbReference type="FunFam" id="1.10.8.420:FF:000001">
    <property type="entry name" value="Recombination protein RecR"/>
    <property type="match status" value="1"/>
</dbReference>
<dbReference type="FunFam" id="3.40.1360.10:FF:000001">
    <property type="entry name" value="Recombination protein RecR"/>
    <property type="match status" value="1"/>
</dbReference>
<dbReference type="Gene3D" id="3.40.1360.10">
    <property type="match status" value="1"/>
</dbReference>
<dbReference type="Gene3D" id="6.10.250.240">
    <property type="match status" value="1"/>
</dbReference>
<dbReference type="Gene3D" id="1.10.8.420">
    <property type="entry name" value="RecR Domain 1"/>
    <property type="match status" value="1"/>
</dbReference>
<dbReference type="HAMAP" id="MF_00017">
    <property type="entry name" value="RecR"/>
    <property type="match status" value="1"/>
</dbReference>
<dbReference type="InterPro" id="IPR000093">
    <property type="entry name" value="DNA_Rcmb_RecR"/>
</dbReference>
<dbReference type="InterPro" id="IPR023627">
    <property type="entry name" value="Rcmb_RecR"/>
</dbReference>
<dbReference type="InterPro" id="IPR015967">
    <property type="entry name" value="Rcmb_RecR_Znf"/>
</dbReference>
<dbReference type="InterPro" id="IPR006171">
    <property type="entry name" value="TOPRIM_dom"/>
</dbReference>
<dbReference type="InterPro" id="IPR034137">
    <property type="entry name" value="TOPRIM_RecR"/>
</dbReference>
<dbReference type="NCBIfam" id="TIGR00615">
    <property type="entry name" value="recR"/>
    <property type="match status" value="1"/>
</dbReference>
<dbReference type="PANTHER" id="PTHR30446">
    <property type="entry name" value="RECOMBINATION PROTEIN RECR"/>
    <property type="match status" value="1"/>
</dbReference>
<dbReference type="PANTHER" id="PTHR30446:SF0">
    <property type="entry name" value="RECOMBINATION PROTEIN RECR"/>
    <property type="match status" value="1"/>
</dbReference>
<dbReference type="Pfam" id="PF21175">
    <property type="entry name" value="RecR_C"/>
    <property type="match status" value="1"/>
</dbReference>
<dbReference type="Pfam" id="PF21176">
    <property type="entry name" value="RecR_HhH"/>
    <property type="match status" value="1"/>
</dbReference>
<dbReference type="Pfam" id="PF02132">
    <property type="entry name" value="RecR_ZnF"/>
    <property type="match status" value="1"/>
</dbReference>
<dbReference type="Pfam" id="PF13662">
    <property type="entry name" value="Toprim_4"/>
    <property type="match status" value="1"/>
</dbReference>
<dbReference type="SMART" id="SM00493">
    <property type="entry name" value="TOPRIM"/>
    <property type="match status" value="1"/>
</dbReference>
<dbReference type="SUPFAM" id="SSF111304">
    <property type="entry name" value="Recombination protein RecR"/>
    <property type="match status" value="1"/>
</dbReference>
<dbReference type="PROSITE" id="PS01300">
    <property type="entry name" value="RECR"/>
    <property type="match status" value="1"/>
</dbReference>
<dbReference type="PROSITE" id="PS50880">
    <property type="entry name" value="TOPRIM"/>
    <property type="match status" value="1"/>
</dbReference>
<proteinExistence type="inferred from homology"/>
<evidence type="ECO:0000255" key="1">
    <source>
        <dbReference type="HAMAP-Rule" id="MF_00017"/>
    </source>
</evidence>
<sequence length="201" mass="21963">MQTSPLLTQLMEALRCLPGVGPKSAQRMAFTLLQRDRSGGMRLAQALTRAMSEIGHCADCRTFTEQEVCNICSNPRRQENGQICVVESPADIYAIEQTGQFSGRYFVLMGHLSPLDGIGPDDIGLDRLEQRLAEEKITEVILATNPTVEGEATANYIAELCAQYDVEASRIAHGVPVGGELEMVDGTTLSHSLAGRHKIRF</sequence>
<protein>
    <recommendedName>
        <fullName evidence="1">Recombination protein RecR</fullName>
    </recommendedName>
</protein>
<name>RECR_SHISS</name>
<reference key="1">
    <citation type="journal article" date="2005" name="Nucleic Acids Res.">
        <title>Genome dynamics and diversity of Shigella species, the etiologic agents of bacillary dysentery.</title>
        <authorList>
            <person name="Yang F."/>
            <person name="Yang J."/>
            <person name="Zhang X."/>
            <person name="Chen L."/>
            <person name="Jiang Y."/>
            <person name="Yan Y."/>
            <person name="Tang X."/>
            <person name="Wang J."/>
            <person name="Xiong Z."/>
            <person name="Dong J."/>
            <person name="Xue Y."/>
            <person name="Zhu Y."/>
            <person name="Xu X."/>
            <person name="Sun L."/>
            <person name="Chen S."/>
            <person name="Nie H."/>
            <person name="Peng J."/>
            <person name="Xu J."/>
            <person name="Wang Y."/>
            <person name="Yuan Z."/>
            <person name="Wen Y."/>
            <person name="Yao Z."/>
            <person name="Shen Y."/>
            <person name="Qiang B."/>
            <person name="Hou Y."/>
            <person name="Yu J."/>
            <person name="Jin Q."/>
        </authorList>
    </citation>
    <scope>NUCLEOTIDE SEQUENCE [LARGE SCALE GENOMIC DNA]</scope>
    <source>
        <strain>Ss046</strain>
    </source>
</reference>
<keyword id="KW-0227">DNA damage</keyword>
<keyword id="KW-0233">DNA recombination</keyword>
<keyword id="KW-0234">DNA repair</keyword>
<keyword id="KW-0479">Metal-binding</keyword>
<keyword id="KW-1185">Reference proteome</keyword>
<keyword id="KW-0862">Zinc</keyword>
<keyword id="KW-0863">Zinc-finger</keyword>
<organism>
    <name type="scientific">Shigella sonnei (strain Ss046)</name>
    <dbReference type="NCBI Taxonomy" id="300269"/>
    <lineage>
        <taxon>Bacteria</taxon>
        <taxon>Pseudomonadati</taxon>
        <taxon>Pseudomonadota</taxon>
        <taxon>Gammaproteobacteria</taxon>
        <taxon>Enterobacterales</taxon>
        <taxon>Enterobacteriaceae</taxon>
        <taxon>Shigella</taxon>
    </lineage>
</organism>
<feature type="chain" id="PRO_1000001614" description="Recombination protein RecR">
    <location>
        <begin position="1"/>
        <end position="201"/>
    </location>
</feature>
<feature type="domain" description="Toprim" evidence="1">
    <location>
        <begin position="81"/>
        <end position="176"/>
    </location>
</feature>
<feature type="zinc finger region" description="C4-type" evidence="1">
    <location>
        <begin position="57"/>
        <end position="72"/>
    </location>
</feature>
<comment type="function">
    <text evidence="1">May play a role in DNA repair. It seems to be involved in an RecBC-independent recombinational process of DNA repair. It may act with RecF and RecO.</text>
</comment>
<comment type="similarity">
    <text evidence="1">Belongs to the RecR family.</text>
</comment>
<gene>
    <name evidence="1" type="primary">recR</name>
    <name type="ordered locus">SSON_0459</name>
</gene>